<reference key="1">
    <citation type="journal article" date="2006" name="Nature">
        <title>The DNA sequence and biological annotation of human chromosome 1.</title>
        <authorList>
            <person name="Gregory S.G."/>
            <person name="Barlow K.F."/>
            <person name="McLay K.E."/>
            <person name="Kaul R."/>
            <person name="Swarbreck D."/>
            <person name="Dunham A."/>
            <person name="Scott C.E."/>
            <person name="Howe K.L."/>
            <person name="Woodfine K."/>
            <person name="Spencer C.C.A."/>
            <person name="Jones M.C."/>
            <person name="Gillson C."/>
            <person name="Searle S."/>
            <person name="Zhou Y."/>
            <person name="Kokocinski F."/>
            <person name="McDonald L."/>
            <person name="Evans R."/>
            <person name="Phillips K."/>
            <person name="Atkinson A."/>
            <person name="Cooper R."/>
            <person name="Jones C."/>
            <person name="Hall R.E."/>
            <person name="Andrews T.D."/>
            <person name="Lloyd C."/>
            <person name="Ainscough R."/>
            <person name="Almeida J.P."/>
            <person name="Ambrose K.D."/>
            <person name="Anderson F."/>
            <person name="Andrew R.W."/>
            <person name="Ashwell R.I.S."/>
            <person name="Aubin K."/>
            <person name="Babbage A.K."/>
            <person name="Bagguley C.L."/>
            <person name="Bailey J."/>
            <person name="Beasley H."/>
            <person name="Bethel G."/>
            <person name="Bird C.P."/>
            <person name="Bray-Allen S."/>
            <person name="Brown J.Y."/>
            <person name="Brown A.J."/>
            <person name="Buckley D."/>
            <person name="Burton J."/>
            <person name="Bye J."/>
            <person name="Carder C."/>
            <person name="Chapman J.C."/>
            <person name="Clark S.Y."/>
            <person name="Clarke G."/>
            <person name="Clee C."/>
            <person name="Cobley V."/>
            <person name="Collier R.E."/>
            <person name="Corby N."/>
            <person name="Coville G.J."/>
            <person name="Davies J."/>
            <person name="Deadman R."/>
            <person name="Dunn M."/>
            <person name="Earthrowl M."/>
            <person name="Ellington A.G."/>
            <person name="Errington H."/>
            <person name="Frankish A."/>
            <person name="Frankland J."/>
            <person name="French L."/>
            <person name="Garner P."/>
            <person name="Garnett J."/>
            <person name="Gay L."/>
            <person name="Ghori M.R.J."/>
            <person name="Gibson R."/>
            <person name="Gilby L.M."/>
            <person name="Gillett W."/>
            <person name="Glithero R.J."/>
            <person name="Grafham D.V."/>
            <person name="Griffiths C."/>
            <person name="Griffiths-Jones S."/>
            <person name="Grocock R."/>
            <person name="Hammond S."/>
            <person name="Harrison E.S.I."/>
            <person name="Hart E."/>
            <person name="Haugen E."/>
            <person name="Heath P.D."/>
            <person name="Holmes S."/>
            <person name="Holt K."/>
            <person name="Howden P.J."/>
            <person name="Hunt A.R."/>
            <person name="Hunt S.E."/>
            <person name="Hunter G."/>
            <person name="Isherwood J."/>
            <person name="James R."/>
            <person name="Johnson C."/>
            <person name="Johnson D."/>
            <person name="Joy A."/>
            <person name="Kay M."/>
            <person name="Kershaw J.K."/>
            <person name="Kibukawa M."/>
            <person name="Kimberley A.M."/>
            <person name="King A."/>
            <person name="Knights A.J."/>
            <person name="Lad H."/>
            <person name="Laird G."/>
            <person name="Lawlor S."/>
            <person name="Leongamornlert D.A."/>
            <person name="Lloyd D.M."/>
            <person name="Loveland J."/>
            <person name="Lovell J."/>
            <person name="Lush M.J."/>
            <person name="Lyne R."/>
            <person name="Martin S."/>
            <person name="Mashreghi-Mohammadi M."/>
            <person name="Matthews L."/>
            <person name="Matthews N.S.W."/>
            <person name="McLaren S."/>
            <person name="Milne S."/>
            <person name="Mistry S."/>
            <person name="Moore M.J.F."/>
            <person name="Nickerson T."/>
            <person name="O'Dell C.N."/>
            <person name="Oliver K."/>
            <person name="Palmeiri A."/>
            <person name="Palmer S.A."/>
            <person name="Parker A."/>
            <person name="Patel D."/>
            <person name="Pearce A.V."/>
            <person name="Peck A.I."/>
            <person name="Pelan S."/>
            <person name="Phelps K."/>
            <person name="Phillimore B.J."/>
            <person name="Plumb R."/>
            <person name="Rajan J."/>
            <person name="Raymond C."/>
            <person name="Rouse G."/>
            <person name="Saenphimmachak C."/>
            <person name="Sehra H.K."/>
            <person name="Sheridan E."/>
            <person name="Shownkeen R."/>
            <person name="Sims S."/>
            <person name="Skuce C.D."/>
            <person name="Smith M."/>
            <person name="Steward C."/>
            <person name="Subramanian S."/>
            <person name="Sycamore N."/>
            <person name="Tracey A."/>
            <person name="Tromans A."/>
            <person name="Van Helmond Z."/>
            <person name="Wall M."/>
            <person name="Wallis J.M."/>
            <person name="White S."/>
            <person name="Whitehead S.L."/>
            <person name="Wilkinson J.E."/>
            <person name="Willey D.L."/>
            <person name="Williams H."/>
            <person name="Wilming L."/>
            <person name="Wray P.W."/>
            <person name="Wu Z."/>
            <person name="Coulson A."/>
            <person name="Vaudin M."/>
            <person name="Sulston J.E."/>
            <person name="Durbin R.M."/>
            <person name="Hubbard T."/>
            <person name="Wooster R."/>
            <person name="Dunham I."/>
            <person name="Carter N.P."/>
            <person name="McVean G."/>
            <person name="Ross M.T."/>
            <person name="Harrow J."/>
            <person name="Olson M.V."/>
            <person name="Beck S."/>
            <person name="Rogers J."/>
            <person name="Bentley D.R."/>
        </authorList>
    </citation>
    <scope>NUCLEOTIDE SEQUENCE [LARGE SCALE GENOMIC DNA]</scope>
</reference>
<reference key="2">
    <citation type="journal article" date="2004" name="Nat. Genet.">
        <title>Complete sequencing and characterization of 21,243 full-length human cDNAs.</title>
        <authorList>
            <person name="Ota T."/>
            <person name="Suzuki Y."/>
            <person name="Nishikawa T."/>
            <person name="Otsuki T."/>
            <person name="Sugiyama T."/>
            <person name="Irie R."/>
            <person name="Wakamatsu A."/>
            <person name="Hayashi K."/>
            <person name="Sato H."/>
            <person name="Nagai K."/>
            <person name="Kimura K."/>
            <person name="Makita H."/>
            <person name="Sekine M."/>
            <person name="Obayashi M."/>
            <person name="Nishi T."/>
            <person name="Shibahara T."/>
            <person name="Tanaka T."/>
            <person name="Ishii S."/>
            <person name="Yamamoto J."/>
            <person name="Saito K."/>
            <person name="Kawai Y."/>
            <person name="Isono Y."/>
            <person name="Nakamura Y."/>
            <person name="Nagahari K."/>
            <person name="Murakami K."/>
            <person name="Yasuda T."/>
            <person name="Iwayanagi T."/>
            <person name="Wagatsuma M."/>
            <person name="Shiratori A."/>
            <person name="Sudo H."/>
            <person name="Hosoiri T."/>
            <person name="Kaku Y."/>
            <person name="Kodaira H."/>
            <person name="Kondo H."/>
            <person name="Sugawara M."/>
            <person name="Takahashi M."/>
            <person name="Kanda K."/>
            <person name="Yokoi T."/>
            <person name="Furuya T."/>
            <person name="Kikkawa E."/>
            <person name="Omura Y."/>
            <person name="Abe K."/>
            <person name="Kamihara K."/>
            <person name="Katsuta N."/>
            <person name="Sato K."/>
            <person name="Tanikawa M."/>
            <person name="Yamazaki M."/>
            <person name="Ninomiya K."/>
            <person name="Ishibashi T."/>
            <person name="Yamashita H."/>
            <person name="Murakawa K."/>
            <person name="Fujimori K."/>
            <person name="Tanai H."/>
            <person name="Kimata M."/>
            <person name="Watanabe M."/>
            <person name="Hiraoka S."/>
            <person name="Chiba Y."/>
            <person name="Ishida S."/>
            <person name="Ono Y."/>
            <person name="Takiguchi S."/>
            <person name="Watanabe S."/>
            <person name="Yosida M."/>
            <person name="Hotuta T."/>
            <person name="Kusano J."/>
            <person name="Kanehori K."/>
            <person name="Takahashi-Fujii A."/>
            <person name="Hara H."/>
            <person name="Tanase T.-O."/>
            <person name="Nomura Y."/>
            <person name="Togiya S."/>
            <person name="Komai F."/>
            <person name="Hara R."/>
            <person name="Takeuchi K."/>
            <person name="Arita M."/>
            <person name="Imose N."/>
            <person name="Musashino K."/>
            <person name="Yuuki H."/>
            <person name="Oshima A."/>
            <person name="Sasaki N."/>
            <person name="Aotsuka S."/>
            <person name="Yoshikawa Y."/>
            <person name="Matsunawa H."/>
            <person name="Ichihara T."/>
            <person name="Shiohata N."/>
            <person name="Sano S."/>
            <person name="Moriya S."/>
            <person name="Momiyama H."/>
            <person name="Satoh N."/>
            <person name="Takami S."/>
            <person name="Terashima Y."/>
            <person name="Suzuki O."/>
            <person name="Nakagawa S."/>
            <person name="Senoh A."/>
            <person name="Mizoguchi H."/>
            <person name="Goto Y."/>
            <person name="Shimizu F."/>
            <person name="Wakebe H."/>
            <person name="Hishigaki H."/>
            <person name="Watanabe T."/>
            <person name="Sugiyama A."/>
            <person name="Takemoto M."/>
            <person name="Kawakami B."/>
            <person name="Yamazaki M."/>
            <person name="Watanabe K."/>
            <person name="Kumagai A."/>
            <person name="Itakura S."/>
            <person name="Fukuzumi Y."/>
            <person name="Fujimori Y."/>
            <person name="Komiyama M."/>
            <person name="Tashiro H."/>
            <person name="Tanigami A."/>
            <person name="Fujiwara T."/>
            <person name="Ono T."/>
            <person name="Yamada K."/>
            <person name="Fujii Y."/>
            <person name="Ozaki K."/>
            <person name="Hirao M."/>
            <person name="Ohmori Y."/>
            <person name="Kawabata A."/>
            <person name="Hikiji T."/>
            <person name="Kobatake N."/>
            <person name="Inagaki H."/>
            <person name="Ikema Y."/>
            <person name="Okamoto S."/>
            <person name="Okitani R."/>
            <person name="Kawakami T."/>
            <person name="Noguchi S."/>
            <person name="Itoh T."/>
            <person name="Shigeta K."/>
            <person name="Senba T."/>
            <person name="Matsumura K."/>
            <person name="Nakajima Y."/>
            <person name="Mizuno T."/>
            <person name="Morinaga M."/>
            <person name="Sasaki M."/>
            <person name="Togashi T."/>
            <person name="Oyama M."/>
            <person name="Hata H."/>
            <person name="Watanabe M."/>
            <person name="Komatsu T."/>
            <person name="Mizushima-Sugano J."/>
            <person name="Satoh T."/>
            <person name="Shirai Y."/>
            <person name="Takahashi Y."/>
            <person name="Nakagawa K."/>
            <person name="Okumura K."/>
            <person name="Nagase T."/>
            <person name="Nomura N."/>
            <person name="Kikuchi H."/>
            <person name="Masuho Y."/>
            <person name="Yamashita R."/>
            <person name="Nakai K."/>
            <person name="Yada T."/>
            <person name="Nakamura Y."/>
            <person name="Ohara O."/>
            <person name="Isogai T."/>
            <person name="Sugano S."/>
        </authorList>
    </citation>
    <scope>NUCLEOTIDE SEQUENCE [LARGE SCALE MRNA] OF 592-1673 (ISOFORM 2)</scope>
    <source>
        <tissue>Brain</tissue>
    </source>
</reference>
<comment type="subcellular location">
    <subcellularLocation>
        <location evidence="1">Cytoplasm</location>
    </subcellularLocation>
</comment>
<comment type="alternative products">
    <event type="alternative splicing"/>
    <isoform>
        <id>B4DH59-1</id>
        <name>1</name>
        <sequence type="displayed"/>
    </isoform>
    <isoform>
        <id>B4DH59-2</id>
        <name>2</name>
        <sequence type="described" ref="VSP_062431 VSP_062432 VSP_062433 VSP_062434"/>
    </isoform>
</comment>
<comment type="miscellaneous">
    <text>Encoded by one of the numerous copies of NBPF genes clustered in the p36, p12 and q21 region of the chromosome 1.</text>
</comment>
<comment type="similarity">
    <text evidence="6">Belongs to the NBPF family.</text>
</comment>
<comment type="sequence caution" evidence="6">
    <conflict type="erroneous initiation">
        <sequence resource="EMBL-CDS" id="BAG58020"/>
    </conflict>
    <text>Extended N-terminus.</text>
</comment>
<evidence type="ECO:0000250" key="1"/>
<evidence type="ECO:0000255" key="2"/>
<evidence type="ECO:0000255" key="3">
    <source>
        <dbReference type="PROSITE-ProRule" id="PRU00076"/>
    </source>
</evidence>
<evidence type="ECO:0000255" key="4">
    <source>
        <dbReference type="PROSITE-ProRule" id="PRU00647"/>
    </source>
</evidence>
<evidence type="ECO:0000256" key="5">
    <source>
        <dbReference type="SAM" id="MobiDB-lite"/>
    </source>
</evidence>
<evidence type="ECO:0000305" key="6"/>
<evidence type="ECO:0000312" key="7">
    <source>
        <dbReference type="HGNC" id="HGNC:49571"/>
    </source>
</evidence>
<sequence length="1673" mass="190189">MPALRPALLWALLALWLCWAAPAHALQCRDGYEPCVNKGMCVTYHSGTGYCKCPEGFLGEYCQHRDPCEKNRCQNGGTCVAQAMLGKATCRCASGFTGEDCQYSTPHPCFVSRPCLNGGTCHMLSRDTYECTCQVGFTGKECQWTDACLSHLCANGSTCTTVANQFSCKCLTGFTGQKCETDVNECDIPGHCQHGGTCLNLPGSYQCQCLQGFTGQYCDRLYVPCAHSPCVNGGTCRQTGDFTFECNCLPVPDSTSSATNVSMVVSAGHWSSEKAEMNILEINETLRPQLPENKQQLRNLKEKCFLTQLAGFLANRQKKYKYEECKDLIKFMLRNERQFKEEKLAEQLKQAEELRQYKVLVHSQERELTQLKEKLREGRDASRSLNEHLQALLTPDEPDKSQGQDLQEQLAEGCRLAQHLVQKLSPENDEDEDEDVQVEEDEKVLESSAPREVQKTEESKVPEDSLEECAITCSNSHGPCDSNQPHKNIKITFEEDEVNSTLVVDRESSHDECQDALNILPVPGPTSSATNVSMVVSAGPLSGEKAAINILEINEKLRPQLAEKKQQFRNLKEKCFLTQLAGFLANQQNKYKYEECKDLIKSMLRNERQFKEEKLAEQLKQAEELRQYKVLVHAQERELTQLREKLREGRDASRSLNEHLQALLTPDEPDKSQGQDLQEQLAEGCRLAQHLVQKLSPENDNDDDEDVQVEVAEKVQKSSAPREMQKAEEKEVPEDSLEECAITCSNSHGPYDCNQPHRKTKITFEEDKVDSTLIGSSSHVEWEDAVHIIPENESDDEEEEEKGPVSPRNLQESEEEEVPQESWDEGYSTLSIPPEMLASYKSYSSTFHSLEEQQVCMAVDIGRHRWDQVKKEDHEATGPRLSRELLDEKGPEVLQDSLDRCYSTPSGCLELTDSCQPYRSAFYVLEQQRVGLAVDMDEIEKYQEVEEDQDPSCPRLSGELLDEKEPEVLQESLDRCYSTPSGCLELTDSCQPYRSAFYILEQQRVGLAVDMDEIEKYQEVEEDQDPSCPRLSGELLDEKEPEVLQESLDRCYSTPSGCLELTDSCQPYRSAFYILEQQRVGLAVDMDEIEKYQEVEEDQDPSCPRLSRELLDEKEPEVLQDSLGRCYSTPSGYLELPDLGQPYSSAVYSLEEQYLGLALDVDRIKKDQEEEEDQGPPCPRLSRELLEVVEPEVLQDSLDRCYSTPSSCLEQPDSCQPYGSSFYALEEKHVGFSLDVGEIEKKGKGKKRRGRRSKKERRRGRKEGEEDQNPPCPRLSRELLDEKGPEVLQDSLDRCYSTPSGCLELTDSCQPYRSAFYILEQQRVGLAVDMDEIEKYQEVEEDQDPSCPRLSRELLEVVEPEVLQDSLDRCYSTPSSCLEQPDSCQPYGSSFYALEEKHVGFSLDVGEIEKYQEVEEDQDPSCPRLSRELLDEKEPEVLQDSLGRCYSTPSGYLELPDLGQPYSSAVYSLEEQYLGLALDVDRIKKDQEEEEDQGPPCPRLSRELLEVVEPEVLQDSLDRCYSTPSSCLEQPDSCQPYGSSFYALEEKHVGFSLDVGEIEKKGKGKKRRGRRSKKERRRGRKEGEEDQNPPCPRLNSMLMEVEEPEVLQDSLDICYSTPSMYFELPDSFQHYRSVFYSFEEEHISFALYVDNRFFTLTVTSLHLVFQMGVIFPQ</sequence>
<keyword id="KW-0025">Alternative splicing</keyword>
<keyword id="KW-0106">Calcium</keyword>
<keyword id="KW-0175">Coiled coil</keyword>
<keyword id="KW-0963">Cytoplasm</keyword>
<keyword id="KW-1015">Disulfide bond</keyword>
<keyword id="KW-0245">EGF-like domain</keyword>
<keyword id="KW-1267">Proteomics identification</keyword>
<keyword id="KW-1185">Reference proteome</keyword>
<keyword id="KW-0677">Repeat</keyword>
<accession>B4DH59</accession>
<accession>A0A087WY62</accession>
<protein>
    <recommendedName>
        <fullName evidence="6">NBPF family member NBPF26</fullName>
    </recommendedName>
    <alternativeName>
        <fullName>Neuroblastoma breakpoint family member 26</fullName>
    </alternativeName>
</protein>
<proteinExistence type="evidence at protein level"/>
<organism>
    <name type="scientific">Homo sapiens</name>
    <name type="common">Human</name>
    <dbReference type="NCBI Taxonomy" id="9606"/>
    <lineage>
        <taxon>Eukaryota</taxon>
        <taxon>Metazoa</taxon>
        <taxon>Chordata</taxon>
        <taxon>Craniata</taxon>
        <taxon>Vertebrata</taxon>
        <taxon>Euteleostomi</taxon>
        <taxon>Mammalia</taxon>
        <taxon>Eutheria</taxon>
        <taxon>Euarchontoglires</taxon>
        <taxon>Primates</taxon>
        <taxon>Haplorrhini</taxon>
        <taxon>Catarrhini</taxon>
        <taxon>Hominidae</taxon>
        <taxon>Homo</taxon>
    </lineage>
</organism>
<dbReference type="EMBL" id="AL022240">
    <property type="status" value="NOT_ANNOTATED_CDS"/>
    <property type="molecule type" value="Genomic_DNA"/>
</dbReference>
<dbReference type="EMBL" id="AC247039">
    <property type="status" value="NOT_ANNOTATED_CDS"/>
    <property type="molecule type" value="Genomic_DNA"/>
</dbReference>
<dbReference type="EMBL" id="AC253572">
    <property type="status" value="NOT_ANNOTATED_CDS"/>
    <property type="molecule type" value="Genomic_DNA"/>
</dbReference>
<dbReference type="EMBL" id="AK294944">
    <property type="protein sequence ID" value="BAG58020.1"/>
    <property type="status" value="ALT_INIT"/>
    <property type="molecule type" value="mRNA"/>
</dbReference>
<dbReference type="RefSeq" id="NP_001392449.1">
    <molecule id="B4DH59-1"/>
    <property type="nucleotide sequence ID" value="NM_001405520.1"/>
</dbReference>
<dbReference type="SMR" id="B4DH59"/>
<dbReference type="IntAct" id="B4DH59">
    <property type="interactions" value="1"/>
</dbReference>
<dbReference type="iPTMnet" id="B4DH59"/>
<dbReference type="PhosphoSitePlus" id="B4DH59"/>
<dbReference type="BioMuta" id="NBPF26"/>
<dbReference type="jPOST" id="B4DH59"/>
<dbReference type="MassIVE" id="B4DH59"/>
<dbReference type="PaxDb" id="9606-ENSP00000481542"/>
<dbReference type="Ensembl" id="ENST00000620612.6">
    <molecule id="B4DH59-1"/>
    <property type="protein sequence ID" value="ENSP00000481542.4"/>
    <property type="gene ID" value="ENSG00000273136.9"/>
</dbReference>
<dbReference type="GeneID" id="101060684"/>
<dbReference type="AGR" id="HGNC:49571"/>
<dbReference type="GeneCards" id="NBPF26"/>
<dbReference type="HGNC" id="HGNC:49571">
    <property type="gene designation" value="NBPF26"/>
</dbReference>
<dbReference type="neXtProt" id="NX_B4DH59"/>
<dbReference type="VEuPathDB" id="HostDB:ENSG00000273136"/>
<dbReference type="eggNOG" id="ENOG502RU1I">
    <property type="taxonomic scope" value="Eukaryota"/>
</dbReference>
<dbReference type="GeneTree" id="ENSGT00420000029746"/>
<dbReference type="InParanoid" id="B4DH59"/>
<dbReference type="OrthoDB" id="9470178at2759"/>
<dbReference type="PAN-GO" id="B4DH59">
    <property type="GO annotations" value="0 GO annotations based on evolutionary models"/>
</dbReference>
<dbReference type="PathwayCommons" id="B4DH59"/>
<dbReference type="ChiTaRS" id="NBPF26">
    <property type="organism name" value="human"/>
</dbReference>
<dbReference type="Pharos" id="B4DH59">
    <property type="development level" value="Tdark"/>
</dbReference>
<dbReference type="Proteomes" id="UP000005640">
    <property type="component" value="Chromosome 1"/>
</dbReference>
<dbReference type="RNAct" id="B4DH59">
    <property type="molecule type" value="protein"/>
</dbReference>
<dbReference type="Bgee" id="ENSG00000273136">
    <property type="expression patterns" value="Expressed in sural nerve and 98 other cell types or tissues"/>
</dbReference>
<dbReference type="GO" id="GO:0005737">
    <property type="term" value="C:cytoplasm"/>
    <property type="evidence" value="ECO:0007669"/>
    <property type="project" value="UniProtKB-SubCell"/>
</dbReference>
<dbReference type="GO" id="GO:0005509">
    <property type="term" value="F:calcium ion binding"/>
    <property type="evidence" value="ECO:0007669"/>
    <property type="project" value="InterPro"/>
</dbReference>
<dbReference type="CDD" id="cd00054">
    <property type="entry name" value="EGF_CA"/>
    <property type="match status" value="4"/>
</dbReference>
<dbReference type="FunFam" id="2.10.25.10:FF:000151">
    <property type="entry name" value="FAT atypical cadherin 4"/>
    <property type="match status" value="1"/>
</dbReference>
<dbReference type="FunFam" id="2.10.25.10:FF:000393">
    <property type="entry name" value="Neurogenic locus notch homolog protein 2"/>
    <property type="match status" value="1"/>
</dbReference>
<dbReference type="FunFam" id="2.10.25.10:FF:000423">
    <property type="entry name" value="Neurogenic locus notch homolog protein 2"/>
    <property type="match status" value="1"/>
</dbReference>
<dbReference type="FunFam" id="2.10.25.10:FF:000095">
    <property type="entry name" value="Notch, isoform B"/>
    <property type="match status" value="1"/>
</dbReference>
<dbReference type="Gene3D" id="2.10.25.10">
    <property type="entry name" value="Laminin"/>
    <property type="match status" value="5"/>
</dbReference>
<dbReference type="InterPro" id="IPR001881">
    <property type="entry name" value="EGF-like_Ca-bd_dom"/>
</dbReference>
<dbReference type="InterPro" id="IPR013032">
    <property type="entry name" value="EGF-like_CS"/>
</dbReference>
<dbReference type="InterPro" id="IPR000742">
    <property type="entry name" value="EGF-like_dom"/>
</dbReference>
<dbReference type="InterPro" id="IPR000152">
    <property type="entry name" value="EGF-type_Asp/Asn_hydroxyl_site"/>
</dbReference>
<dbReference type="InterPro" id="IPR018097">
    <property type="entry name" value="EGF_Ca-bd_CS"/>
</dbReference>
<dbReference type="InterPro" id="IPR055306">
    <property type="entry name" value="NBPF"/>
</dbReference>
<dbReference type="InterPro" id="IPR049883">
    <property type="entry name" value="NOTCH1_EGF-like"/>
</dbReference>
<dbReference type="InterPro" id="IPR010630">
    <property type="entry name" value="Olduvai_dom"/>
</dbReference>
<dbReference type="PANTHER" id="PTHR14199:SF35">
    <property type="entry name" value="NEUROBLASTOMA BREAKPOINT FAMILY MEMBER 1-RELATED"/>
    <property type="match status" value="1"/>
</dbReference>
<dbReference type="PANTHER" id="PTHR14199">
    <property type="entry name" value="NEUROBLASTOMA BREAKPOINT FAMILY MEMBER 6-LIKE PROTEIN"/>
    <property type="match status" value="1"/>
</dbReference>
<dbReference type="Pfam" id="PF00008">
    <property type="entry name" value="EGF"/>
    <property type="match status" value="2"/>
</dbReference>
<dbReference type="Pfam" id="PF07645">
    <property type="entry name" value="EGF_CA"/>
    <property type="match status" value="1"/>
</dbReference>
<dbReference type="Pfam" id="PF12661">
    <property type="entry name" value="hEGF"/>
    <property type="match status" value="1"/>
</dbReference>
<dbReference type="Pfam" id="PF06758">
    <property type="entry name" value="Olduvai"/>
    <property type="match status" value="13"/>
</dbReference>
<dbReference type="SMART" id="SM01148">
    <property type="entry name" value="DUF1220"/>
    <property type="match status" value="13"/>
</dbReference>
<dbReference type="SMART" id="SM00181">
    <property type="entry name" value="EGF"/>
    <property type="match status" value="6"/>
</dbReference>
<dbReference type="SMART" id="SM00179">
    <property type="entry name" value="EGF_CA"/>
    <property type="match status" value="4"/>
</dbReference>
<dbReference type="SUPFAM" id="SSF57196">
    <property type="entry name" value="EGF/Laminin"/>
    <property type="match status" value="5"/>
</dbReference>
<dbReference type="PROSITE" id="PS00022">
    <property type="entry name" value="EGF_1"/>
    <property type="match status" value="5"/>
</dbReference>
<dbReference type="PROSITE" id="PS01186">
    <property type="entry name" value="EGF_2"/>
    <property type="match status" value="5"/>
</dbReference>
<dbReference type="PROSITE" id="PS50026">
    <property type="entry name" value="EGF_3"/>
    <property type="match status" value="6"/>
</dbReference>
<dbReference type="PROSITE" id="PS01187">
    <property type="entry name" value="EGF_CA"/>
    <property type="match status" value="1"/>
</dbReference>
<dbReference type="PROSITE" id="PS51316">
    <property type="entry name" value="ODV"/>
    <property type="match status" value="13"/>
</dbReference>
<feature type="chain" id="PRO_0000428661" description="NBPF family member NBPF26">
    <location>
        <begin position="1"/>
        <end position="1673"/>
    </location>
</feature>
<feature type="domain" description="EGF-like 1" evidence="3">
    <location>
        <begin position="24"/>
        <end position="63"/>
    </location>
</feature>
<feature type="domain" description="EGF-like 2" evidence="3">
    <location>
        <begin position="64"/>
        <end position="102"/>
    </location>
</feature>
<feature type="domain" description="EGF-like 3" evidence="3">
    <location>
        <begin position="105"/>
        <end position="143"/>
    </location>
</feature>
<feature type="domain" description="EGF-like 4" evidence="3">
    <location>
        <begin position="144"/>
        <end position="180"/>
    </location>
</feature>
<feature type="domain" description="EGF-like 5; calcium-binding" evidence="3">
    <location>
        <begin position="182"/>
        <end position="219"/>
    </location>
</feature>
<feature type="domain" description="EGF-like 6" evidence="3">
    <location>
        <begin position="221"/>
        <end position="258"/>
    </location>
</feature>
<feature type="domain" description="Olduvai 1" evidence="4">
    <location>
        <begin position="427"/>
        <end position="521"/>
    </location>
</feature>
<feature type="domain" description="Olduvai 2" evidence="4">
    <location>
        <begin position="698"/>
        <end position="790"/>
    </location>
</feature>
<feature type="domain" description="Olduvai 3" evidence="4">
    <location>
        <begin position="791"/>
        <end position="879"/>
    </location>
</feature>
<feature type="domain" description="Olduvai 4" evidence="4">
    <location>
        <begin position="882"/>
        <end position="937"/>
    </location>
</feature>
<feature type="domain" description="Olduvai 5" evidence="4">
    <location>
        <begin position="938"/>
        <end position="1029"/>
    </location>
</feature>
<feature type="domain" description="Olduvai 6" evidence="4">
    <location>
        <begin position="1032"/>
        <end position="1104"/>
    </location>
</feature>
<feature type="domain" description="Olduvai 7" evidence="4">
    <location>
        <begin position="1107"/>
        <end position="1162"/>
    </location>
</feature>
<feature type="domain" description="Olduvai 8" evidence="4">
    <location>
        <begin position="1163"/>
        <end position="1255"/>
    </location>
</feature>
<feature type="domain" description="Olduvai 9" evidence="4">
    <location>
        <begin position="1256"/>
        <end position="1348"/>
    </location>
</feature>
<feature type="domain" description="Olduvai 10" evidence="4">
    <location>
        <begin position="1351"/>
        <end position="1423"/>
    </location>
</feature>
<feature type="domain" description="Olduvai 11" evidence="4">
    <location>
        <begin position="1426"/>
        <end position="1481"/>
    </location>
</feature>
<feature type="domain" description="Olduvai 12" evidence="4">
    <location>
        <begin position="1482"/>
        <end position="1574"/>
    </location>
</feature>
<feature type="domain" description="Olduvai 13" evidence="4">
    <location>
        <begin position="1575"/>
        <end position="1673"/>
    </location>
</feature>
<feature type="region of interest" description="Disordered" evidence="5">
    <location>
        <begin position="423"/>
        <end position="463"/>
    </location>
</feature>
<feature type="region of interest" description="Disordered" evidence="5">
    <location>
        <begin position="713"/>
        <end position="734"/>
    </location>
</feature>
<feature type="region of interest" description="Disordered" evidence="5">
    <location>
        <begin position="782"/>
        <end position="828"/>
    </location>
</feature>
<feature type="region of interest" description="Disordered" evidence="5">
    <location>
        <begin position="1242"/>
        <end position="1280"/>
    </location>
</feature>
<feature type="region of interest" description="Disordered" evidence="5">
    <location>
        <begin position="1561"/>
        <end position="1594"/>
    </location>
</feature>
<feature type="coiled-coil region" evidence="2">
    <location>
        <begin position="337"/>
        <end position="381"/>
    </location>
</feature>
<feature type="compositionally biased region" description="Acidic residues" evidence="5">
    <location>
        <begin position="427"/>
        <end position="443"/>
    </location>
</feature>
<feature type="compositionally biased region" description="Basic and acidic residues" evidence="5">
    <location>
        <begin position="452"/>
        <end position="463"/>
    </location>
</feature>
<feature type="compositionally biased region" description="Acidic residues" evidence="5">
    <location>
        <begin position="792"/>
        <end position="801"/>
    </location>
</feature>
<feature type="compositionally biased region" description="Acidic residues" evidence="5">
    <location>
        <begin position="812"/>
        <end position="824"/>
    </location>
</feature>
<feature type="compositionally biased region" description="Basic residues" evidence="5">
    <location>
        <begin position="1243"/>
        <end position="1261"/>
    </location>
</feature>
<feature type="compositionally biased region" description="Basic residues" evidence="5">
    <location>
        <begin position="1562"/>
        <end position="1580"/>
    </location>
</feature>
<feature type="disulfide bond" evidence="3">
    <location>
        <begin position="28"/>
        <end position="41"/>
    </location>
</feature>
<feature type="disulfide bond" evidence="3">
    <location>
        <begin position="35"/>
        <end position="51"/>
    </location>
</feature>
<feature type="disulfide bond" evidence="3">
    <location>
        <begin position="53"/>
        <end position="62"/>
    </location>
</feature>
<feature type="disulfide bond" evidence="3">
    <location>
        <begin position="68"/>
        <end position="79"/>
    </location>
</feature>
<feature type="disulfide bond" evidence="3">
    <location>
        <begin position="73"/>
        <end position="90"/>
    </location>
</feature>
<feature type="disulfide bond" evidence="3">
    <location>
        <begin position="92"/>
        <end position="101"/>
    </location>
</feature>
<feature type="disulfide bond" evidence="3">
    <location>
        <begin position="109"/>
        <end position="121"/>
    </location>
</feature>
<feature type="disulfide bond" evidence="3">
    <location>
        <begin position="115"/>
        <end position="131"/>
    </location>
</feature>
<feature type="disulfide bond" evidence="3">
    <location>
        <begin position="133"/>
        <end position="142"/>
    </location>
</feature>
<feature type="disulfide bond" evidence="3">
    <location>
        <begin position="148"/>
        <end position="159"/>
    </location>
</feature>
<feature type="disulfide bond" evidence="3">
    <location>
        <begin position="153"/>
        <end position="168"/>
    </location>
</feature>
<feature type="disulfide bond" evidence="3">
    <location>
        <begin position="170"/>
        <end position="179"/>
    </location>
</feature>
<feature type="disulfide bond" evidence="3">
    <location>
        <begin position="186"/>
        <end position="198"/>
    </location>
</feature>
<feature type="disulfide bond" evidence="3">
    <location>
        <begin position="192"/>
        <end position="207"/>
    </location>
</feature>
<feature type="disulfide bond" evidence="3">
    <location>
        <begin position="209"/>
        <end position="218"/>
    </location>
</feature>
<feature type="disulfide bond" evidence="3">
    <location>
        <begin position="225"/>
        <end position="236"/>
    </location>
</feature>
<feature type="disulfide bond" evidence="3">
    <location>
        <begin position="230"/>
        <end position="246"/>
    </location>
</feature>
<feature type="splice variant" id="VSP_062431" description="In isoform 2.">
    <original>EVLQDSLGRCYSTPSGYLELPDLGQPYSSAVYSLEEQYLGLALDVDRIKKDQEEEEDQGPPCPRLSRELLEVVEPEVLQDSLDRCYSTPSSCLEQPDSCQPYGSSFYALEEKHVGFSLDVGEIEKKGKGKKRRGRRSKKERRRGRKEGEEDQNPPCPRLSRELLDEKGPEVLQD</original>
    <variation>EVLQE</variation>
    <location>
        <begin position="1117"/>
        <end position="1290"/>
    </location>
</feature>
<feature type="splice variant" id="VSP_062432" description="In isoform 2.">
    <original>RELLEVV</original>
    <variation>GELLDEK</variation>
    <location>
        <begin position="1352"/>
        <end position="1358"/>
    </location>
</feature>
<feature type="splice variant" id="VSP_062433" description="In isoform 2.">
    <original>SCLEQP</original>
    <variation>GCLELT</variation>
    <location>
        <begin position="1376"/>
        <end position="1381"/>
    </location>
</feature>
<feature type="splice variant" id="VSP_062434" description="In isoform 2.">
    <original>GSSFYALEEKHVGFSLDVG</original>
    <variation>RSAFYILEQQRVGLAVDMD</variation>
    <location>
        <begin position="1388"/>
        <end position="1406"/>
    </location>
</feature>
<feature type="sequence conflict" description="In Ref. 2; BAG58020." evidence="6" ref="2">
    <original>DPS</original>
    <variation>NPP</variation>
    <location>
        <begin position="950"/>
        <end position="952"/>
    </location>
</feature>
<feature type="sequence conflict" description="In Ref. 2; BAG58020." evidence="6" ref="2">
    <original>G</original>
    <variation>R</variation>
    <location>
        <position position="958"/>
    </location>
</feature>
<feature type="sequence conflict" description="In Ref. 2; BAG58020." evidence="6" ref="2">
    <original>E</original>
    <variation>G</variation>
    <location>
        <position position="965"/>
    </location>
</feature>
<feature type="sequence conflict" description="In Ref. 2; BAG58020." evidence="6" ref="2">
    <original>E</original>
    <variation>D</variation>
    <location>
        <position position="971"/>
    </location>
</feature>
<feature type="sequence conflict" description="In Ref. 2; BAG58020." evidence="6" ref="2">
    <original>R</original>
    <variation>G</variation>
    <location>
        <position position="1108"/>
    </location>
</feature>
<feature type="sequence conflict" description="In Ref. 2; BAG58020." evidence="6" ref="2">
    <original>D</original>
    <variation>E</variation>
    <location>
        <position position="1365"/>
    </location>
</feature>
<gene>
    <name evidence="7" type="primary">NBPF26</name>
</gene>
<name>NBPFP_HUMAN</name>